<sequence>MAADHTDVLIVGAGPAGLFAGFYVGMRGLSFRFVDPLPEPGGQLTALYPEKYIYDVAGFPKVYAKDLVKGLVEQVAPFNPVYSLGERAETLEREGDLFKVTTSQGNAYTAKAVIIAAGVGAFEPRRIGAPGEREFEGRGVYYAVKSKAEFQGKRVLIVGGGDSAVDWALNLLDTARRITLIHRRPQFRAHEASVKELMKAHEEGRLEVLTPYELRRVEGDERVRWAVVFHNQTQEELALEVDAVLILAGYITKLGPLANWGLALEKNKIKVDTTMATSIPGVYACGDIVTYPGKLPLIVLGFGEAAIAANHAAAYANPALKVNPGHSSEKAAPGT</sequence>
<organism>
    <name type="scientific">Thermus thermophilus (strain ATCC BAA-163 / DSM 7039 / HB27)</name>
    <dbReference type="NCBI Taxonomy" id="262724"/>
    <lineage>
        <taxon>Bacteria</taxon>
        <taxon>Thermotogati</taxon>
        <taxon>Deinococcota</taxon>
        <taxon>Deinococci</taxon>
        <taxon>Thermales</taxon>
        <taxon>Thermaceae</taxon>
        <taxon>Thermus</taxon>
    </lineage>
</organism>
<feature type="chain" id="PRO_0000364980" description="Ferredoxin--NADP reductase">
    <location>
        <begin position="1"/>
        <end position="335"/>
    </location>
</feature>
<feature type="binding site" evidence="1">
    <location>
        <position position="35"/>
    </location>
    <ligand>
        <name>FAD</name>
        <dbReference type="ChEBI" id="CHEBI:57692"/>
    </ligand>
</feature>
<feature type="binding site" evidence="1">
    <location>
        <position position="43"/>
    </location>
    <ligand>
        <name>FAD</name>
        <dbReference type="ChEBI" id="CHEBI:57692"/>
    </ligand>
</feature>
<feature type="binding site" evidence="1">
    <location>
        <position position="48"/>
    </location>
    <ligand>
        <name>FAD</name>
        <dbReference type="ChEBI" id="CHEBI:57692"/>
    </ligand>
</feature>
<feature type="binding site" evidence="1">
    <location>
        <position position="88"/>
    </location>
    <ligand>
        <name>FAD</name>
        <dbReference type="ChEBI" id="CHEBI:57692"/>
    </ligand>
</feature>
<feature type="binding site" evidence="1">
    <location>
        <position position="122"/>
    </location>
    <ligand>
        <name>FAD</name>
        <dbReference type="ChEBI" id="CHEBI:57692"/>
    </ligand>
</feature>
<feature type="binding site" evidence="1">
    <location>
        <position position="287"/>
    </location>
    <ligand>
        <name>FAD</name>
        <dbReference type="ChEBI" id="CHEBI:57692"/>
    </ligand>
</feature>
<feature type="binding site" evidence="1">
    <location>
        <position position="328"/>
    </location>
    <ligand>
        <name>FAD</name>
        <dbReference type="ChEBI" id="CHEBI:57692"/>
    </ligand>
</feature>
<proteinExistence type="inferred from homology"/>
<comment type="catalytic activity">
    <reaction evidence="1">
        <text>2 reduced [2Fe-2S]-[ferredoxin] + NADP(+) + H(+) = 2 oxidized [2Fe-2S]-[ferredoxin] + NADPH</text>
        <dbReference type="Rhea" id="RHEA:20125"/>
        <dbReference type="Rhea" id="RHEA-COMP:10000"/>
        <dbReference type="Rhea" id="RHEA-COMP:10001"/>
        <dbReference type="ChEBI" id="CHEBI:15378"/>
        <dbReference type="ChEBI" id="CHEBI:33737"/>
        <dbReference type="ChEBI" id="CHEBI:33738"/>
        <dbReference type="ChEBI" id="CHEBI:57783"/>
        <dbReference type="ChEBI" id="CHEBI:58349"/>
        <dbReference type="EC" id="1.18.1.2"/>
    </reaction>
</comment>
<comment type="cofactor">
    <cofactor evidence="1">
        <name>FAD</name>
        <dbReference type="ChEBI" id="CHEBI:57692"/>
    </cofactor>
    <text evidence="1">Binds 1 FAD per subunit.</text>
</comment>
<comment type="subunit">
    <text evidence="1">Homodimer.</text>
</comment>
<comment type="similarity">
    <text evidence="1">Belongs to the ferredoxin--NADP reductase type 2 family.</text>
</comment>
<gene>
    <name type="ordered locus">TT_C0096</name>
</gene>
<evidence type="ECO:0000255" key="1">
    <source>
        <dbReference type="HAMAP-Rule" id="MF_01685"/>
    </source>
</evidence>
<protein>
    <recommendedName>
        <fullName evidence="1">Ferredoxin--NADP reductase</fullName>
        <shortName evidence="1">FNR</shortName>
        <shortName evidence="1">Fd-NADP(+) reductase</shortName>
        <ecNumber evidence="1">1.18.1.2</ecNumber>
    </recommendedName>
</protein>
<accession>Q72LG3</accession>
<reference key="1">
    <citation type="journal article" date="2004" name="Nat. Biotechnol.">
        <title>The genome sequence of the extreme thermophile Thermus thermophilus.</title>
        <authorList>
            <person name="Henne A."/>
            <person name="Brueggemann H."/>
            <person name="Raasch C."/>
            <person name="Wiezer A."/>
            <person name="Hartsch T."/>
            <person name="Liesegang H."/>
            <person name="Johann A."/>
            <person name="Lienard T."/>
            <person name="Gohl O."/>
            <person name="Martinez-Arias R."/>
            <person name="Jacobi C."/>
            <person name="Starkuviene V."/>
            <person name="Schlenczeck S."/>
            <person name="Dencker S."/>
            <person name="Huber R."/>
            <person name="Klenk H.-P."/>
            <person name="Kramer W."/>
            <person name="Merkl R."/>
            <person name="Gottschalk G."/>
            <person name="Fritz H.-J."/>
        </authorList>
    </citation>
    <scope>NUCLEOTIDE SEQUENCE [LARGE SCALE GENOMIC DNA]</scope>
    <source>
        <strain>ATCC BAA-163 / DSM 7039 / HB27</strain>
    </source>
</reference>
<dbReference type="EC" id="1.18.1.2" evidence="1"/>
<dbReference type="EMBL" id="AE017221">
    <property type="protein sequence ID" value="AAS80444.1"/>
    <property type="molecule type" value="Genomic_DNA"/>
</dbReference>
<dbReference type="RefSeq" id="WP_011172553.1">
    <property type="nucleotide sequence ID" value="NC_005835.1"/>
</dbReference>
<dbReference type="SMR" id="Q72LG3"/>
<dbReference type="KEGG" id="tth:TT_C0096"/>
<dbReference type="eggNOG" id="COG0492">
    <property type="taxonomic scope" value="Bacteria"/>
</dbReference>
<dbReference type="HOGENOM" id="CLU_031864_5_5_0"/>
<dbReference type="OrthoDB" id="9806179at2"/>
<dbReference type="Proteomes" id="UP000000592">
    <property type="component" value="Chromosome"/>
</dbReference>
<dbReference type="GO" id="GO:0004324">
    <property type="term" value="F:ferredoxin-NADP+ reductase activity"/>
    <property type="evidence" value="ECO:0007669"/>
    <property type="project" value="UniProtKB-UniRule"/>
</dbReference>
<dbReference type="GO" id="GO:0050660">
    <property type="term" value="F:flavin adenine dinucleotide binding"/>
    <property type="evidence" value="ECO:0007669"/>
    <property type="project" value="UniProtKB-UniRule"/>
</dbReference>
<dbReference type="GO" id="GO:0050661">
    <property type="term" value="F:NADP binding"/>
    <property type="evidence" value="ECO:0007669"/>
    <property type="project" value="UniProtKB-UniRule"/>
</dbReference>
<dbReference type="Gene3D" id="3.50.50.60">
    <property type="entry name" value="FAD/NAD(P)-binding domain"/>
    <property type="match status" value="2"/>
</dbReference>
<dbReference type="HAMAP" id="MF_01685">
    <property type="entry name" value="FENR2"/>
    <property type="match status" value="1"/>
</dbReference>
<dbReference type="InterPro" id="IPR036188">
    <property type="entry name" value="FAD/NAD-bd_sf"/>
</dbReference>
<dbReference type="InterPro" id="IPR023753">
    <property type="entry name" value="FAD/NAD-binding_dom"/>
</dbReference>
<dbReference type="InterPro" id="IPR022890">
    <property type="entry name" value="Fd--NADP_Rdtase_type_2"/>
</dbReference>
<dbReference type="InterPro" id="IPR050097">
    <property type="entry name" value="Ferredoxin-NADP_redctase_2"/>
</dbReference>
<dbReference type="PANTHER" id="PTHR48105">
    <property type="entry name" value="THIOREDOXIN REDUCTASE 1-RELATED-RELATED"/>
    <property type="match status" value="1"/>
</dbReference>
<dbReference type="Pfam" id="PF07992">
    <property type="entry name" value="Pyr_redox_2"/>
    <property type="match status" value="1"/>
</dbReference>
<dbReference type="PRINTS" id="PR00368">
    <property type="entry name" value="FADPNR"/>
</dbReference>
<dbReference type="PRINTS" id="PR00469">
    <property type="entry name" value="PNDRDTASEII"/>
</dbReference>
<dbReference type="SUPFAM" id="SSF51905">
    <property type="entry name" value="FAD/NAD(P)-binding domain"/>
    <property type="match status" value="1"/>
</dbReference>
<name>FENR_THET2</name>
<keyword id="KW-0274">FAD</keyword>
<keyword id="KW-0285">Flavoprotein</keyword>
<keyword id="KW-0521">NADP</keyword>
<keyword id="KW-0560">Oxidoreductase</keyword>